<gene>
    <name type="primary">SERPINB1</name>
    <name type="synonym">ELANH2</name>
    <name type="synonym">MNEI</name>
    <name type="synonym">PI2</name>
</gene>
<feature type="chain" id="PRO_0000094101" description="Leukocyte elastase inhibitor">
    <location>
        <begin position="1"/>
        <end position="379"/>
    </location>
</feature>
<feature type="region of interest" description="CARD-binding motif (CBM)" evidence="6">
    <location>
        <begin position="351"/>
        <end position="379"/>
    </location>
</feature>
<feature type="site" description="Reactive bond 1">
    <location>
        <begin position="343"/>
        <end position="344"/>
    </location>
</feature>
<feature type="site" description="Reactive bond 2">
    <location>
        <begin position="344"/>
        <end position="345"/>
    </location>
</feature>
<feature type="modified residue" description="N-acetylmethionine" evidence="2 10">
    <location>
        <position position="1"/>
    </location>
</feature>
<feature type="modified residue" description="N6-acetyllysine" evidence="9">
    <location>
        <position position="137"/>
    </location>
</feature>
<feature type="modified residue" description="N6-acetyllysine" evidence="9">
    <location>
        <position position="177"/>
    </location>
</feature>
<feature type="modified residue" description="Phosphoserine" evidence="11">
    <location>
        <position position="300"/>
    </location>
</feature>
<feature type="splice variant" id="VSP_056511" description="In isoform 2." evidence="7">
    <location>
        <begin position="1"/>
        <end position="151"/>
    </location>
</feature>
<feature type="sequence variant" id="VAR_051945" description="In dbSNP:rs34825616.">
    <original>A</original>
    <variation>V</variation>
    <location>
        <position position="82"/>
    </location>
</feature>
<feature type="mutagenesis site" description="Loss of proteinase-3-binding activity but caspase-binding activity remains unaffected; in association with A-344." evidence="6">
    <original>F</original>
    <variation>A</variation>
    <location>
        <position position="343"/>
    </location>
</feature>
<feature type="mutagenesis site" description="Loss of proteinase-3-binding activity but caspase-binding activity remains unaffected; in association with A-343." evidence="6">
    <original>C</original>
    <variation>A</variation>
    <location>
        <position position="344"/>
    </location>
</feature>
<feature type="sequence conflict" description="In Ref. 4; AAP35574." evidence="8" ref="4">
    <original>K</original>
    <variation>R</variation>
    <location>
        <position position="137"/>
    </location>
</feature>
<feature type="sequence conflict" description="In Ref. 3; BAF84016." evidence="8" ref="3">
    <original>A</original>
    <variation>V</variation>
    <location>
        <position position="149"/>
    </location>
</feature>
<feature type="sequence conflict" description="In Ref. 3; BAF84016." evidence="8" ref="3">
    <original>L</original>
    <variation>F</variation>
    <location>
        <position position="264"/>
    </location>
</feature>
<feature type="sequence conflict" description="In Ref. 9; AA sequence." evidence="8" ref="9">
    <location>
        <position position="272"/>
    </location>
</feature>
<feature type="sequence conflict" description="In Ref. 3; BAF84016." evidence="8" ref="3">
    <original>E</original>
    <variation>K</variation>
    <location>
        <position position="329"/>
    </location>
</feature>
<feature type="helix" evidence="12">
    <location>
        <begin position="3"/>
        <end position="22"/>
    </location>
</feature>
<feature type="strand" evidence="12">
    <location>
        <begin position="24"/>
        <end position="26"/>
    </location>
</feature>
<feature type="strand" evidence="12">
    <location>
        <begin position="28"/>
        <end position="30"/>
    </location>
</feature>
<feature type="helix" evidence="12">
    <location>
        <begin position="32"/>
        <end position="43"/>
    </location>
</feature>
<feature type="helix" evidence="12">
    <location>
        <begin position="48"/>
        <end position="57"/>
    </location>
</feature>
<feature type="helix" evidence="12">
    <location>
        <begin position="60"/>
        <end position="62"/>
    </location>
</feature>
<feature type="helix" evidence="12">
    <location>
        <begin position="66"/>
        <end position="77"/>
    </location>
</feature>
<feature type="strand" evidence="12">
    <location>
        <begin position="83"/>
        <end position="95"/>
    </location>
</feature>
<feature type="helix" evidence="12">
    <location>
        <begin position="102"/>
        <end position="111"/>
    </location>
</feature>
<feature type="strand" evidence="12">
    <location>
        <begin position="116"/>
        <end position="119"/>
    </location>
</feature>
<feature type="helix" evidence="12">
    <location>
        <begin position="121"/>
        <end position="139"/>
    </location>
</feature>
<feature type="turn" evidence="12">
    <location>
        <begin position="140"/>
        <end position="142"/>
    </location>
</feature>
<feature type="strand" evidence="12">
    <location>
        <begin position="159"/>
        <end position="168"/>
    </location>
</feature>
<feature type="strand" evidence="12">
    <location>
        <begin position="171"/>
        <end position="173"/>
    </location>
</feature>
<feature type="turn" evidence="12">
    <location>
        <begin position="177"/>
        <end position="179"/>
    </location>
</feature>
<feature type="strand" evidence="12">
    <location>
        <begin position="181"/>
        <end position="188"/>
    </location>
</feature>
<feature type="strand" evidence="12">
    <location>
        <begin position="191"/>
        <end position="209"/>
    </location>
</feature>
<feature type="turn" evidence="12">
    <location>
        <begin position="210"/>
        <end position="213"/>
    </location>
</feature>
<feature type="strand" evidence="12">
    <location>
        <begin position="214"/>
        <end position="221"/>
    </location>
</feature>
<feature type="strand" evidence="12">
    <location>
        <begin position="224"/>
        <end position="235"/>
    </location>
</feature>
<feature type="strand" evidence="12">
    <location>
        <begin position="238"/>
        <end position="242"/>
    </location>
</feature>
<feature type="helix" evidence="12">
    <location>
        <begin position="244"/>
        <end position="249"/>
    </location>
</feature>
<feature type="helix" evidence="12">
    <location>
        <begin position="252"/>
        <end position="259"/>
    </location>
</feature>
<feature type="helix" evidence="12">
    <location>
        <begin position="261"/>
        <end position="263"/>
    </location>
</feature>
<feature type="strand" evidence="12">
    <location>
        <begin position="265"/>
        <end position="274"/>
    </location>
</feature>
<feature type="strand" evidence="12">
    <location>
        <begin position="276"/>
        <end position="283"/>
    </location>
</feature>
<feature type="helix" evidence="12">
    <location>
        <begin position="285"/>
        <end position="290"/>
    </location>
</feature>
<feature type="helix" evidence="12">
    <location>
        <begin position="295"/>
        <end position="297"/>
    </location>
</feature>
<feature type="turn" evidence="12">
    <location>
        <begin position="299"/>
        <end position="301"/>
    </location>
</feature>
<feature type="turn" evidence="12">
    <location>
        <begin position="305"/>
        <end position="307"/>
    </location>
</feature>
<feature type="strand" evidence="12">
    <location>
        <begin position="315"/>
        <end position="326"/>
    </location>
</feature>
<feature type="strand" evidence="12">
    <location>
        <begin position="345"/>
        <end position="347"/>
    </location>
</feature>
<feature type="strand" evidence="12">
    <location>
        <begin position="349"/>
        <end position="353"/>
    </location>
</feature>
<feature type="strand" evidence="12">
    <location>
        <begin position="358"/>
        <end position="364"/>
    </location>
</feature>
<feature type="turn" evidence="12">
    <location>
        <begin position="365"/>
        <end position="368"/>
    </location>
</feature>
<feature type="strand" evidence="12">
    <location>
        <begin position="369"/>
        <end position="376"/>
    </location>
</feature>
<comment type="function">
    <text evidence="1 4 5 6">Neutrophil serine protease inhibitor that plays an essential role in the regulation of the innate immune response, inflammation and cellular homeostasis (PubMed:30692621). Acts primarily to protect the cell from proteases released in the cytoplasm during stress or infection. These proteases are important in killing microbes but when released from granules, these potent enzymes also destroy host proteins and contribute to mortality. Regulates the activity of the neutrophil proteases elastase, cathepsin G, proteinase-3, chymase, chymotrypsin, and kallikrein-3 (PubMed:11747453, PubMed:30692621). Also acts as a potent intracellular inhibitor of GZMH by directly blocking its proteolytic activity (PubMed:23269243). During inflammation, limits the activity of inflammatory caspases CASP1, CASP4 and CASP5 by suppressing their caspase-recruitment domain (CARD) oligomerization and enzymatic activation (PubMed:30692621). When secreted, promotes the proliferation of beta-cells via its protease inhibitory function (PubMed:26701651).</text>
</comment>
<comment type="subunit">
    <text evidence="4 6">Monomer (PubMed:23269243). Interacts (via C-terminus) with CASP1; CASP4 (via CARD domain) and CASP5; these interactions regulate the activity of inflammatory caspases (PubMed:30692621). Interacts with PRTN3 (PubMed:30692621). Interacts with GZMH (PubMed:23269243).</text>
</comment>
<comment type="subcellular location">
    <subcellularLocation>
        <location evidence="5">Secreted</location>
    </subcellularLocation>
    <subcellularLocation>
        <location evidence="4">Cytoplasm</location>
    </subcellularLocation>
    <subcellularLocation>
        <location evidence="4">Cytolytic granule</location>
    </subcellularLocation>
    <subcellularLocation>
        <location evidence="4">Early endosome</location>
    </subcellularLocation>
</comment>
<comment type="alternative products">
    <event type="alternative splicing"/>
    <isoform>
        <id>P30740-1</id>
        <name>1</name>
        <sequence type="displayed"/>
    </isoform>
    <isoform>
        <id>P30740-2</id>
        <name>2</name>
        <sequence type="described" ref="VSP_056511"/>
    </isoform>
</comment>
<comment type="tissue specificity">
    <text evidence="3">In human bone marrow, present in all CD45+ populations. Expression levels are highest in the neutrophil lineage, intermediate in monocytic, and lowest in lymphocytic lineage. Within the neutrophil lineage, expression is highest in promyelocytes.</text>
</comment>
<comment type="domain">
    <text>Reactive bond 1 is specific for reaction with chymotrypsin-like protease such as cathepsin G, chymotrypsin, chymase or granzyme H, while reactive bond 2 is specific for reaction with elastase-like protease such as neutrophil elastase, proteinase-3, pancreatic elastase or PSA.</text>
</comment>
<comment type="similarity">
    <text evidence="8">Belongs to the serpin family. Ov-serpin subfamily.</text>
</comment>
<name>ILEU_HUMAN</name>
<accession>P30740</accession>
<accession>A8K5L2</accession>
<accession>B4DNT0</accession>
<accession>Q53FB9</accession>
<accession>Q5W0E1</accession>
<accession>Q9UDF8</accession>
<proteinExistence type="evidence at protein level"/>
<dbReference type="EMBL" id="M93056">
    <property type="status" value="NOT_ANNOTATED_CDS"/>
    <property type="molecule type" value="mRNA"/>
</dbReference>
<dbReference type="EMBL" id="AF053630">
    <property type="protein sequence ID" value="AAC31394.1"/>
    <property type="molecule type" value="Genomic_DNA"/>
</dbReference>
<dbReference type="EMBL" id="AK291327">
    <property type="protein sequence ID" value="BAF84016.1"/>
    <property type="molecule type" value="mRNA"/>
</dbReference>
<dbReference type="EMBL" id="AK298044">
    <property type="protein sequence ID" value="BAG60342.1"/>
    <property type="molecule type" value="mRNA"/>
</dbReference>
<dbReference type="EMBL" id="BT006928">
    <property type="protein sequence ID" value="AAP35574.1"/>
    <property type="molecule type" value="mRNA"/>
</dbReference>
<dbReference type="EMBL" id="AK223370">
    <property type="protein sequence ID" value="BAD97090.1"/>
    <property type="molecule type" value="mRNA"/>
</dbReference>
<dbReference type="EMBL" id="AL139092">
    <property type="status" value="NOT_ANNOTATED_CDS"/>
    <property type="molecule type" value="Genomic_DNA"/>
</dbReference>
<dbReference type="EMBL" id="BC009015">
    <property type="protein sequence ID" value="AAH09015.1"/>
    <property type="molecule type" value="mRNA"/>
</dbReference>
<dbReference type="CCDS" id="CCDS4477.1">
    <molecule id="P30740-1"/>
</dbReference>
<dbReference type="PIR" id="S27383">
    <property type="entry name" value="S27383"/>
</dbReference>
<dbReference type="RefSeq" id="NP_109591.1">
    <molecule id="P30740-1"/>
    <property type="nucleotide sequence ID" value="NM_030666.4"/>
</dbReference>
<dbReference type="RefSeq" id="XP_011512635.1">
    <molecule id="P30740-1"/>
    <property type="nucleotide sequence ID" value="XM_011514333.2"/>
</dbReference>
<dbReference type="RefSeq" id="XP_011512636.1">
    <molecule id="P30740-1"/>
    <property type="nucleotide sequence ID" value="XM_011514334.3"/>
</dbReference>
<dbReference type="RefSeq" id="XP_054210404.1">
    <molecule id="P30740-1"/>
    <property type="nucleotide sequence ID" value="XM_054354429.1"/>
</dbReference>
<dbReference type="RefSeq" id="XP_054210405.1">
    <molecule id="P30740-1"/>
    <property type="nucleotide sequence ID" value="XM_054354430.1"/>
</dbReference>
<dbReference type="PDB" id="4GA7">
    <property type="method" value="X-ray"/>
    <property type="resolution" value="2.90 A"/>
    <property type="chains" value="A/B=1-379"/>
</dbReference>
<dbReference type="PDBsum" id="4GA7"/>
<dbReference type="SMR" id="P30740"/>
<dbReference type="BioGRID" id="108307">
    <property type="interactions" value="72"/>
</dbReference>
<dbReference type="FunCoup" id="P30740">
    <property type="interactions" value="475"/>
</dbReference>
<dbReference type="IntAct" id="P30740">
    <property type="interactions" value="42"/>
</dbReference>
<dbReference type="STRING" id="9606.ENSP00000370115"/>
<dbReference type="MEROPS" id="I04.006"/>
<dbReference type="GlyGen" id="P30740">
    <property type="glycosylation" value="3 sites, 2 N-linked glycans (2 sites), 1 O-linked glycan (1 site)"/>
</dbReference>
<dbReference type="iPTMnet" id="P30740"/>
<dbReference type="MetOSite" id="P30740"/>
<dbReference type="PhosphoSitePlus" id="P30740"/>
<dbReference type="BioMuta" id="SERPINB1"/>
<dbReference type="DMDM" id="266344"/>
<dbReference type="OGP" id="P30740"/>
<dbReference type="REPRODUCTION-2DPAGE" id="IPI00027444"/>
<dbReference type="CPTAC" id="CPTAC-131"/>
<dbReference type="CPTAC" id="CPTAC-132"/>
<dbReference type="jPOST" id="P30740"/>
<dbReference type="MassIVE" id="P30740"/>
<dbReference type="PaxDb" id="9606-ENSP00000370115"/>
<dbReference type="PeptideAtlas" id="P30740"/>
<dbReference type="PRIDE" id="P30740"/>
<dbReference type="ProteomicsDB" id="4721"/>
<dbReference type="ProteomicsDB" id="54734">
    <molecule id="P30740-1"/>
</dbReference>
<dbReference type="Pumba" id="P30740"/>
<dbReference type="Antibodypedia" id="9274">
    <property type="antibodies" value="555 antibodies from 31 providers"/>
</dbReference>
<dbReference type="DNASU" id="1992"/>
<dbReference type="Ensembl" id="ENST00000380739.6">
    <molecule id="P30740-1"/>
    <property type="protein sequence ID" value="ENSP00000370115.5"/>
    <property type="gene ID" value="ENSG00000021355.13"/>
</dbReference>
<dbReference type="GeneID" id="1992"/>
<dbReference type="KEGG" id="hsa:1992"/>
<dbReference type="MANE-Select" id="ENST00000380739.6">
    <property type="protein sequence ID" value="ENSP00000370115.5"/>
    <property type="RefSeq nucleotide sequence ID" value="NM_030666.4"/>
    <property type="RefSeq protein sequence ID" value="NP_109591.1"/>
</dbReference>
<dbReference type="AGR" id="HGNC:3311"/>
<dbReference type="CTD" id="1992"/>
<dbReference type="DisGeNET" id="1992"/>
<dbReference type="GeneCards" id="SERPINB1"/>
<dbReference type="HGNC" id="HGNC:3311">
    <property type="gene designation" value="SERPINB1"/>
</dbReference>
<dbReference type="HPA" id="ENSG00000021355">
    <property type="expression patterns" value="Tissue enhanced (bone marrow, esophagus)"/>
</dbReference>
<dbReference type="MIM" id="130135">
    <property type="type" value="gene"/>
</dbReference>
<dbReference type="neXtProt" id="NX_P30740"/>
<dbReference type="OpenTargets" id="ENSG00000021355"/>
<dbReference type="PharmGKB" id="PA35046"/>
<dbReference type="VEuPathDB" id="HostDB:ENSG00000021355"/>
<dbReference type="eggNOG" id="KOG2392">
    <property type="taxonomic scope" value="Eukaryota"/>
</dbReference>
<dbReference type="GeneTree" id="ENSGT00940000154573"/>
<dbReference type="HOGENOM" id="CLU_023330_0_2_1"/>
<dbReference type="InParanoid" id="P30740"/>
<dbReference type="OMA" id="YFNAAWA"/>
<dbReference type="OrthoDB" id="671595at2759"/>
<dbReference type="PAN-GO" id="P30740">
    <property type="GO annotations" value="4 GO annotations based on evolutionary models"/>
</dbReference>
<dbReference type="PhylomeDB" id="P30740"/>
<dbReference type="TreeFam" id="TF352619"/>
<dbReference type="PathwayCommons" id="P30740"/>
<dbReference type="Reactome" id="R-HSA-6798695">
    <property type="pathway name" value="Neutrophil degranulation"/>
</dbReference>
<dbReference type="SignaLink" id="P30740"/>
<dbReference type="BioGRID-ORCS" id="1992">
    <property type="hits" value="17 hits in 1161 CRISPR screens"/>
</dbReference>
<dbReference type="ChiTaRS" id="SERPINB1">
    <property type="organism name" value="human"/>
</dbReference>
<dbReference type="EvolutionaryTrace" id="P30740"/>
<dbReference type="GeneWiki" id="SERPINB1"/>
<dbReference type="GenomeRNAi" id="1992"/>
<dbReference type="Pharos" id="P30740">
    <property type="development level" value="Tbio"/>
</dbReference>
<dbReference type="PRO" id="PR:P30740"/>
<dbReference type="Proteomes" id="UP000005640">
    <property type="component" value="Chromosome 6"/>
</dbReference>
<dbReference type="RNAct" id="P30740">
    <property type="molecule type" value="protein"/>
</dbReference>
<dbReference type="Bgee" id="ENSG00000021355">
    <property type="expression patterns" value="Expressed in esophagus squamous epithelium and 194 other cell types or tissues"/>
</dbReference>
<dbReference type="ExpressionAtlas" id="P30740">
    <property type="expression patterns" value="baseline and differential"/>
</dbReference>
<dbReference type="GO" id="GO:0062023">
    <property type="term" value="C:collagen-containing extracellular matrix"/>
    <property type="evidence" value="ECO:0007005"/>
    <property type="project" value="BHF-UCL"/>
</dbReference>
<dbReference type="GO" id="GO:0044194">
    <property type="term" value="C:cytolytic granule"/>
    <property type="evidence" value="ECO:0007669"/>
    <property type="project" value="UniProtKB-SubCell"/>
</dbReference>
<dbReference type="GO" id="GO:0036464">
    <property type="term" value="C:cytoplasmic ribonucleoprotein granule"/>
    <property type="evidence" value="ECO:0000314"/>
    <property type="project" value="HPA"/>
</dbReference>
<dbReference type="GO" id="GO:0005769">
    <property type="term" value="C:early endosome"/>
    <property type="evidence" value="ECO:0007669"/>
    <property type="project" value="UniProtKB-SubCell"/>
</dbReference>
<dbReference type="GO" id="GO:0070062">
    <property type="term" value="C:extracellular exosome"/>
    <property type="evidence" value="ECO:0007005"/>
    <property type="project" value="UniProtKB"/>
</dbReference>
<dbReference type="GO" id="GO:0005576">
    <property type="term" value="C:extracellular region"/>
    <property type="evidence" value="ECO:0000314"/>
    <property type="project" value="UniProtKB"/>
</dbReference>
<dbReference type="GO" id="GO:0005615">
    <property type="term" value="C:extracellular space"/>
    <property type="evidence" value="ECO:0007005"/>
    <property type="project" value="UniProtKB"/>
</dbReference>
<dbReference type="GO" id="GO:0016020">
    <property type="term" value="C:membrane"/>
    <property type="evidence" value="ECO:0007005"/>
    <property type="project" value="UniProtKB"/>
</dbReference>
<dbReference type="GO" id="GO:0034774">
    <property type="term" value="C:secretory granule lumen"/>
    <property type="evidence" value="ECO:0000304"/>
    <property type="project" value="Reactome"/>
</dbReference>
<dbReference type="GO" id="GO:0030414">
    <property type="term" value="F:peptidase inhibitor activity"/>
    <property type="evidence" value="ECO:0000314"/>
    <property type="project" value="UniProtKB"/>
</dbReference>
<dbReference type="GO" id="GO:0004867">
    <property type="term" value="F:serine-type endopeptidase inhibitor activity"/>
    <property type="evidence" value="ECO:0000315"/>
    <property type="project" value="FlyBase"/>
</dbReference>
<dbReference type="GO" id="GO:0030336">
    <property type="term" value="P:negative regulation of cell migration"/>
    <property type="evidence" value="ECO:0000315"/>
    <property type="project" value="FlyBase"/>
</dbReference>
<dbReference type="GO" id="GO:0010951">
    <property type="term" value="P:negative regulation of endopeptidase activity"/>
    <property type="evidence" value="ECO:0000314"/>
    <property type="project" value="UniProtKB"/>
</dbReference>
<dbReference type="GO" id="GO:0032691">
    <property type="term" value="P:negative regulation of interleukin-1 beta production"/>
    <property type="evidence" value="ECO:0000315"/>
    <property type="project" value="UniProtKB"/>
</dbReference>
<dbReference type="GO" id="GO:0044342">
    <property type="term" value="P:type B pancreatic cell proliferation"/>
    <property type="evidence" value="ECO:0000314"/>
    <property type="project" value="UniProtKB"/>
</dbReference>
<dbReference type="CDD" id="cd19560">
    <property type="entry name" value="serpinB1_LEI"/>
    <property type="match status" value="1"/>
</dbReference>
<dbReference type="FunFam" id="2.10.310.10:FF:000001">
    <property type="entry name" value="Serpin family A member 1"/>
    <property type="match status" value="1"/>
</dbReference>
<dbReference type="FunFam" id="3.30.497.10:FF:000004">
    <property type="entry name" value="Serpin family B member 1"/>
    <property type="match status" value="1"/>
</dbReference>
<dbReference type="FunFam" id="2.30.39.10:FF:000014">
    <property type="entry name" value="Serpin family B member 9"/>
    <property type="match status" value="1"/>
</dbReference>
<dbReference type="Gene3D" id="2.30.39.10">
    <property type="entry name" value="Alpha-1-antitrypsin, domain 1"/>
    <property type="match status" value="1"/>
</dbReference>
<dbReference type="Gene3D" id="3.30.497.10">
    <property type="entry name" value="Antithrombin, subunit I, domain 2"/>
    <property type="match status" value="1"/>
</dbReference>
<dbReference type="InterPro" id="IPR023795">
    <property type="entry name" value="Serpin_CS"/>
</dbReference>
<dbReference type="InterPro" id="IPR023796">
    <property type="entry name" value="Serpin_dom"/>
</dbReference>
<dbReference type="InterPro" id="IPR000215">
    <property type="entry name" value="Serpin_fam"/>
</dbReference>
<dbReference type="InterPro" id="IPR036186">
    <property type="entry name" value="Serpin_sf"/>
</dbReference>
<dbReference type="InterPro" id="IPR042178">
    <property type="entry name" value="Serpin_sf_1"/>
</dbReference>
<dbReference type="InterPro" id="IPR042185">
    <property type="entry name" value="Serpin_sf_2"/>
</dbReference>
<dbReference type="PANTHER" id="PTHR11461:SF180">
    <property type="entry name" value="LEUKOCYTE ELASTASE INHIBITOR"/>
    <property type="match status" value="1"/>
</dbReference>
<dbReference type="PANTHER" id="PTHR11461">
    <property type="entry name" value="SERINE PROTEASE INHIBITOR, SERPIN"/>
    <property type="match status" value="1"/>
</dbReference>
<dbReference type="Pfam" id="PF00079">
    <property type="entry name" value="Serpin"/>
    <property type="match status" value="1"/>
</dbReference>
<dbReference type="SMART" id="SM00093">
    <property type="entry name" value="SERPIN"/>
    <property type="match status" value="1"/>
</dbReference>
<dbReference type="SUPFAM" id="SSF56574">
    <property type="entry name" value="Serpins"/>
    <property type="match status" value="1"/>
</dbReference>
<dbReference type="PROSITE" id="PS00284">
    <property type="entry name" value="SERPIN"/>
    <property type="match status" value="1"/>
</dbReference>
<organism>
    <name type="scientific">Homo sapiens</name>
    <name type="common">Human</name>
    <dbReference type="NCBI Taxonomy" id="9606"/>
    <lineage>
        <taxon>Eukaryota</taxon>
        <taxon>Metazoa</taxon>
        <taxon>Chordata</taxon>
        <taxon>Craniata</taxon>
        <taxon>Vertebrata</taxon>
        <taxon>Euteleostomi</taxon>
        <taxon>Mammalia</taxon>
        <taxon>Eutheria</taxon>
        <taxon>Euarchontoglires</taxon>
        <taxon>Primates</taxon>
        <taxon>Haplorrhini</taxon>
        <taxon>Catarrhini</taxon>
        <taxon>Hominidae</taxon>
        <taxon>Homo</taxon>
    </lineage>
</organism>
<keyword id="KW-0002">3D-structure</keyword>
<keyword id="KW-0007">Acetylation</keyword>
<keyword id="KW-0025">Alternative splicing</keyword>
<keyword id="KW-0963">Cytoplasm</keyword>
<keyword id="KW-0903">Direct protein sequencing</keyword>
<keyword id="KW-0967">Endosome</keyword>
<keyword id="KW-0458">Lysosome</keyword>
<keyword id="KW-0597">Phosphoprotein</keyword>
<keyword id="KW-0646">Protease inhibitor</keyword>
<keyword id="KW-1267">Proteomics identification</keyword>
<keyword id="KW-1185">Reference proteome</keyword>
<keyword id="KW-0964">Secreted</keyword>
<keyword id="KW-0722">Serine protease inhibitor</keyword>
<reference key="1">
    <citation type="journal article" date="1992" name="Proc. Natl. Acad. Sci. U.S.A.">
        <title>Sequence and molecular characterization of human monocyte/neutrophil elastase inhibitor.</title>
        <authorList>
            <person name="Remold-O'Donnell E."/>
            <person name="Chin J."/>
            <person name="Alberts M."/>
        </authorList>
    </citation>
    <scope>NUCLEOTIDE SEQUENCE [MRNA] (ISOFORM 1)</scope>
</reference>
<reference key="2">
    <citation type="journal article" date="1998" name="Gene">
        <title>Structure and sequence of human M/NEI (monocyte/neutrophil elastase inhibitor), an Ov-serpin family gene.</title>
        <authorList>
            <person name="Zeng W."/>
            <person name="Silverman G.A."/>
            <person name="Remold-O'Donnell E."/>
        </authorList>
    </citation>
    <scope>NUCLEOTIDE SEQUENCE [GENOMIC DNA]</scope>
</reference>
<reference key="3">
    <citation type="journal article" date="2004" name="Nat. Genet.">
        <title>Complete sequencing and characterization of 21,243 full-length human cDNAs.</title>
        <authorList>
            <person name="Ota T."/>
            <person name="Suzuki Y."/>
            <person name="Nishikawa T."/>
            <person name="Otsuki T."/>
            <person name="Sugiyama T."/>
            <person name="Irie R."/>
            <person name="Wakamatsu A."/>
            <person name="Hayashi K."/>
            <person name="Sato H."/>
            <person name="Nagai K."/>
            <person name="Kimura K."/>
            <person name="Makita H."/>
            <person name="Sekine M."/>
            <person name="Obayashi M."/>
            <person name="Nishi T."/>
            <person name="Shibahara T."/>
            <person name="Tanaka T."/>
            <person name="Ishii S."/>
            <person name="Yamamoto J."/>
            <person name="Saito K."/>
            <person name="Kawai Y."/>
            <person name="Isono Y."/>
            <person name="Nakamura Y."/>
            <person name="Nagahari K."/>
            <person name="Murakami K."/>
            <person name="Yasuda T."/>
            <person name="Iwayanagi T."/>
            <person name="Wagatsuma M."/>
            <person name="Shiratori A."/>
            <person name="Sudo H."/>
            <person name="Hosoiri T."/>
            <person name="Kaku Y."/>
            <person name="Kodaira H."/>
            <person name="Kondo H."/>
            <person name="Sugawara M."/>
            <person name="Takahashi M."/>
            <person name="Kanda K."/>
            <person name="Yokoi T."/>
            <person name="Furuya T."/>
            <person name="Kikkawa E."/>
            <person name="Omura Y."/>
            <person name="Abe K."/>
            <person name="Kamihara K."/>
            <person name="Katsuta N."/>
            <person name="Sato K."/>
            <person name="Tanikawa M."/>
            <person name="Yamazaki M."/>
            <person name="Ninomiya K."/>
            <person name="Ishibashi T."/>
            <person name="Yamashita H."/>
            <person name="Murakawa K."/>
            <person name="Fujimori K."/>
            <person name="Tanai H."/>
            <person name="Kimata M."/>
            <person name="Watanabe M."/>
            <person name="Hiraoka S."/>
            <person name="Chiba Y."/>
            <person name="Ishida S."/>
            <person name="Ono Y."/>
            <person name="Takiguchi S."/>
            <person name="Watanabe S."/>
            <person name="Yosida M."/>
            <person name="Hotuta T."/>
            <person name="Kusano J."/>
            <person name="Kanehori K."/>
            <person name="Takahashi-Fujii A."/>
            <person name="Hara H."/>
            <person name="Tanase T.-O."/>
            <person name="Nomura Y."/>
            <person name="Togiya S."/>
            <person name="Komai F."/>
            <person name="Hara R."/>
            <person name="Takeuchi K."/>
            <person name="Arita M."/>
            <person name="Imose N."/>
            <person name="Musashino K."/>
            <person name="Yuuki H."/>
            <person name="Oshima A."/>
            <person name="Sasaki N."/>
            <person name="Aotsuka S."/>
            <person name="Yoshikawa Y."/>
            <person name="Matsunawa H."/>
            <person name="Ichihara T."/>
            <person name="Shiohata N."/>
            <person name="Sano S."/>
            <person name="Moriya S."/>
            <person name="Momiyama H."/>
            <person name="Satoh N."/>
            <person name="Takami S."/>
            <person name="Terashima Y."/>
            <person name="Suzuki O."/>
            <person name="Nakagawa S."/>
            <person name="Senoh A."/>
            <person name="Mizoguchi H."/>
            <person name="Goto Y."/>
            <person name="Shimizu F."/>
            <person name="Wakebe H."/>
            <person name="Hishigaki H."/>
            <person name="Watanabe T."/>
            <person name="Sugiyama A."/>
            <person name="Takemoto M."/>
            <person name="Kawakami B."/>
            <person name="Yamazaki M."/>
            <person name="Watanabe K."/>
            <person name="Kumagai A."/>
            <person name="Itakura S."/>
            <person name="Fukuzumi Y."/>
            <person name="Fujimori Y."/>
            <person name="Komiyama M."/>
            <person name="Tashiro H."/>
            <person name="Tanigami A."/>
            <person name="Fujiwara T."/>
            <person name="Ono T."/>
            <person name="Yamada K."/>
            <person name="Fujii Y."/>
            <person name="Ozaki K."/>
            <person name="Hirao M."/>
            <person name="Ohmori Y."/>
            <person name="Kawabata A."/>
            <person name="Hikiji T."/>
            <person name="Kobatake N."/>
            <person name="Inagaki H."/>
            <person name="Ikema Y."/>
            <person name="Okamoto S."/>
            <person name="Okitani R."/>
            <person name="Kawakami T."/>
            <person name="Noguchi S."/>
            <person name="Itoh T."/>
            <person name="Shigeta K."/>
            <person name="Senba T."/>
            <person name="Matsumura K."/>
            <person name="Nakajima Y."/>
            <person name="Mizuno T."/>
            <person name="Morinaga M."/>
            <person name="Sasaki M."/>
            <person name="Togashi T."/>
            <person name="Oyama M."/>
            <person name="Hata H."/>
            <person name="Watanabe M."/>
            <person name="Komatsu T."/>
            <person name="Mizushima-Sugano J."/>
            <person name="Satoh T."/>
            <person name="Shirai Y."/>
            <person name="Takahashi Y."/>
            <person name="Nakagawa K."/>
            <person name="Okumura K."/>
            <person name="Nagase T."/>
            <person name="Nomura N."/>
            <person name="Kikuchi H."/>
            <person name="Masuho Y."/>
            <person name="Yamashita R."/>
            <person name="Nakai K."/>
            <person name="Yada T."/>
            <person name="Nakamura Y."/>
            <person name="Ohara O."/>
            <person name="Isogai T."/>
            <person name="Sugano S."/>
        </authorList>
    </citation>
    <scope>NUCLEOTIDE SEQUENCE [LARGE SCALE MRNA] (ISOFORMS 1 AND 2)</scope>
    <source>
        <tissue>Lung</tissue>
        <tissue>Tongue</tissue>
    </source>
</reference>
<reference key="4">
    <citation type="submission" date="2003-05" db="EMBL/GenBank/DDBJ databases">
        <title>Cloning of human full-length CDSs in BD Creator(TM) system donor vector.</title>
        <authorList>
            <person name="Kalnine N."/>
            <person name="Chen X."/>
            <person name="Rolfs A."/>
            <person name="Halleck A."/>
            <person name="Hines L."/>
            <person name="Eisenstein S."/>
            <person name="Koundinya M."/>
            <person name="Raphael J."/>
            <person name="Moreira D."/>
            <person name="Kelley T."/>
            <person name="LaBaer J."/>
            <person name="Lin Y."/>
            <person name="Phelan M."/>
            <person name="Farmer A."/>
        </authorList>
    </citation>
    <scope>NUCLEOTIDE SEQUENCE [LARGE SCALE MRNA] (ISOFORM 1)</scope>
</reference>
<reference key="5">
    <citation type="submission" date="2005-04" db="EMBL/GenBank/DDBJ databases">
        <authorList>
            <person name="Totoki Y."/>
            <person name="Toyoda A."/>
            <person name="Takeda T."/>
            <person name="Sakaki Y."/>
            <person name="Tanaka A."/>
            <person name="Yokoyama S."/>
        </authorList>
    </citation>
    <scope>NUCLEOTIDE SEQUENCE [LARGE SCALE MRNA] (ISOFORM 1)</scope>
    <source>
        <tissue>Small intestine</tissue>
    </source>
</reference>
<reference key="6">
    <citation type="journal article" date="2003" name="Nature">
        <title>The DNA sequence and analysis of human chromosome 6.</title>
        <authorList>
            <person name="Mungall A.J."/>
            <person name="Palmer S.A."/>
            <person name="Sims S.K."/>
            <person name="Edwards C.A."/>
            <person name="Ashurst J.L."/>
            <person name="Wilming L."/>
            <person name="Jones M.C."/>
            <person name="Horton R."/>
            <person name="Hunt S.E."/>
            <person name="Scott C.E."/>
            <person name="Gilbert J.G.R."/>
            <person name="Clamp M.E."/>
            <person name="Bethel G."/>
            <person name="Milne S."/>
            <person name="Ainscough R."/>
            <person name="Almeida J.P."/>
            <person name="Ambrose K.D."/>
            <person name="Andrews T.D."/>
            <person name="Ashwell R.I.S."/>
            <person name="Babbage A.K."/>
            <person name="Bagguley C.L."/>
            <person name="Bailey J."/>
            <person name="Banerjee R."/>
            <person name="Barker D.J."/>
            <person name="Barlow K.F."/>
            <person name="Bates K."/>
            <person name="Beare D.M."/>
            <person name="Beasley H."/>
            <person name="Beasley O."/>
            <person name="Bird C.P."/>
            <person name="Blakey S.E."/>
            <person name="Bray-Allen S."/>
            <person name="Brook J."/>
            <person name="Brown A.J."/>
            <person name="Brown J.Y."/>
            <person name="Burford D.C."/>
            <person name="Burrill W."/>
            <person name="Burton J."/>
            <person name="Carder C."/>
            <person name="Carter N.P."/>
            <person name="Chapman J.C."/>
            <person name="Clark S.Y."/>
            <person name="Clark G."/>
            <person name="Clee C.M."/>
            <person name="Clegg S."/>
            <person name="Cobley V."/>
            <person name="Collier R.E."/>
            <person name="Collins J.E."/>
            <person name="Colman L.K."/>
            <person name="Corby N.R."/>
            <person name="Coville G.J."/>
            <person name="Culley K.M."/>
            <person name="Dhami P."/>
            <person name="Davies J."/>
            <person name="Dunn M."/>
            <person name="Earthrowl M.E."/>
            <person name="Ellington A.E."/>
            <person name="Evans K.A."/>
            <person name="Faulkner L."/>
            <person name="Francis M.D."/>
            <person name="Frankish A."/>
            <person name="Frankland J."/>
            <person name="French L."/>
            <person name="Garner P."/>
            <person name="Garnett J."/>
            <person name="Ghori M.J."/>
            <person name="Gilby L.M."/>
            <person name="Gillson C.J."/>
            <person name="Glithero R.J."/>
            <person name="Grafham D.V."/>
            <person name="Grant M."/>
            <person name="Gribble S."/>
            <person name="Griffiths C."/>
            <person name="Griffiths M.N.D."/>
            <person name="Hall R."/>
            <person name="Halls K.S."/>
            <person name="Hammond S."/>
            <person name="Harley J.L."/>
            <person name="Hart E.A."/>
            <person name="Heath P.D."/>
            <person name="Heathcott R."/>
            <person name="Holmes S.J."/>
            <person name="Howden P.J."/>
            <person name="Howe K.L."/>
            <person name="Howell G.R."/>
            <person name="Huckle E."/>
            <person name="Humphray S.J."/>
            <person name="Humphries M.D."/>
            <person name="Hunt A.R."/>
            <person name="Johnson C.M."/>
            <person name="Joy A.A."/>
            <person name="Kay M."/>
            <person name="Keenan S.J."/>
            <person name="Kimberley A.M."/>
            <person name="King A."/>
            <person name="Laird G.K."/>
            <person name="Langford C."/>
            <person name="Lawlor S."/>
            <person name="Leongamornlert D.A."/>
            <person name="Leversha M."/>
            <person name="Lloyd C.R."/>
            <person name="Lloyd D.M."/>
            <person name="Loveland J.E."/>
            <person name="Lovell J."/>
            <person name="Martin S."/>
            <person name="Mashreghi-Mohammadi M."/>
            <person name="Maslen G.L."/>
            <person name="Matthews L."/>
            <person name="McCann O.T."/>
            <person name="McLaren S.J."/>
            <person name="McLay K."/>
            <person name="McMurray A."/>
            <person name="Moore M.J.F."/>
            <person name="Mullikin J.C."/>
            <person name="Niblett D."/>
            <person name="Nickerson T."/>
            <person name="Novik K.L."/>
            <person name="Oliver K."/>
            <person name="Overton-Larty E.K."/>
            <person name="Parker A."/>
            <person name="Patel R."/>
            <person name="Pearce A.V."/>
            <person name="Peck A.I."/>
            <person name="Phillimore B.J.C.T."/>
            <person name="Phillips S."/>
            <person name="Plumb R.W."/>
            <person name="Porter K.M."/>
            <person name="Ramsey Y."/>
            <person name="Ranby S.A."/>
            <person name="Rice C.M."/>
            <person name="Ross M.T."/>
            <person name="Searle S.M."/>
            <person name="Sehra H.K."/>
            <person name="Sheridan E."/>
            <person name="Skuce C.D."/>
            <person name="Smith S."/>
            <person name="Smith M."/>
            <person name="Spraggon L."/>
            <person name="Squares S.L."/>
            <person name="Steward C.A."/>
            <person name="Sycamore N."/>
            <person name="Tamlyn-Hall G."/>
            <person name="Tester J."/>
            <person name="Theaker A.J."/>
            <person name="Thomas D.W."/>
            <person name="Thorpe A."/>
            <person name="Tracey A."/>
            <person name="Tromans A."/>
            <person name="Tubby B."/>
            <person name="Wall M."/>
            <person name="Wallis J.M."/>
            <person name="West A.P."/>
            <person name="White S.S."/>
            <person name="Whitehead S.L."/>
            <person name="Whittaker H."/>
            <person name="Wild A."/>
            <person name="Willey D.J."/>
            <person name="Wilmer T.E."/>
            <person name="Wood J.M."/>
            <person name="Wray P.W."/>
            <person name="Wyatt J.C."/>
            <person name="Young L."/>
            <person name="Younger R.M."/>
            <person name="Bentley D.R."/>
            <person name="Coulson A."/>
            <person name="Durbin R.M."/>
            <person name="Hubbard T."/>
            <person name="Sulston J.E."/>
            <person name="Dunham I."/>
            <person name="Rogers J."/>
            <person name="Beck S."/>
        </authorList>
    </citation>
    <scope>NUCLEOTIDE SEQUENCE [LARGE SCALE GENOMIC DNA]</scope>
</reference>
<reference key="7">
    <citation type="journal article" date="2004" name="Genome Res.">
        <title>The status, quality, and expansion of the NIH full-length cDNA project: the Mammalian Gene Collection (MGC).</title>
        <authorList>
            <consortium name="The MGC Project Team"/>
        </authorList>
    </citation>
    <scope>NUCLEOTIDE SEQUENCE [LARGE SCALE MRNA] (ISOFORM 1)</scope>
    <source>
        <tissue>Cervix</tissue>
    </source>
</reference>
<reference key="8">
    <citation type="journal article" date="2003" name="Nat. Biotechnol.">
        <title>Exploring proteomes and analyzing protein processing by mass spectrometric identification of sorted N-terminal peptides.</title>
        <authorList>
            <person name="Gevaert K."/>
            <person name="Goethals M."/>
            <person name="Martens L."/>
            <person name="Van Damme J."/>
            <person name="Staes A."/>
            <person name="Thomas G.R."/>
            <person name="Vandekerckhove J."/>
        </authorList>
    </citation>
    <scope>PROTEIN SEQUENCE OF 1-10</scope>
    <scope>ACETYLATION AT MET-1</scope>
    <source>
        <tissue>Platelet</tissue>
    </source>
</reference>
<reference key="9">
    <citation type="journal article" date="1995" name="Biochim. Biophys. Acta">
        <title>A serpin from human tumor cells with direct lymphoid immunomodulatory activity: mitogenic stimulation of human tumor-infiltrating lymphocytes.</title>
        <authorList>
            <person name="Packard B.Z."/>
            <person name="Lee S.S."/>
            <person name="Remold-O'Donnell E."/>
            <person name="Komoriya A."/>
        </authorList>
    </citation>
    <scope>PROTEIN SEQUENCE OF 111-129; 216-244 AND 255-274</scope>
</reference>
<reference key="10">
    <citation type="journal article" date="1992" name="Electrophoresis">
        <title>Microsequences of 145 proteins recorded in the two-dimensional gel protein database of normal human epidermal keratinocytes.</title>
        <authorList>
            <person name="Rasmussen H.H."/>
            <person name="van Damme J."/>
            <person name="Puype M."/>
            <person name="Gesser B."/>
            <person name="Celis J.E."/>
            <person name="Vandekerckhove J."/>
        </authorList>
    </citation>
    <scope>PROTEIN SEQUENCE OF 178-185; 204-210 AND 364-371</scope>
    <source>
        <tissue>Keratinocyte</tissue>
    </source>
</reference>
<reference key="11">
    <citation type="journal article" date="2001" name="Biochemistry">
        <title>The serpin MNEI inhibits elastase-like and chymotrypsin-like serine proteases through efficient reactions at two active sites.</title>
        <authorList>
            <person name="Cooley J."/>
            <person name="Takayama T.K."/>
            <person name="Shapiro S.D."/>
            <person name="Schechter N.M."/>
            <person name="Remold-O'Donnell E."/>
        </authorList>
    </citation>
    <scope>FUNCTION</scope>
    <scope>REACTIVE SITES</scope>
    <scope>IDENTIFICATION BY MASS SPECTROMETRY</scope>
</reference>
<reference key="12">
    <citation type="journal article" date="2009" name="Science">
        <title>Lysine acetylation targets protein complexes and co-regulates major cellular functions.</title>
        <authorList>
            <person name="Choudhary C."/>
            <person name="Kumar C."/>
            <person name="Gnad F."/>
            <person name="Nielsen M.L."/>
            <person name="Rehman M."/>
            <person name="Walther T.C."/>
            <person name="Olsen J.V."/>
            <person name="Mann M."/>
        </authorList>
    </citation>
    <scope>ACETYLATION [LARGE SCALE ANALYSIS] AT LYS-137 AND LYS-177</scope>
    <scope>IDENTIFICATION BY MASS SPECTROMETRY [LARGE SCALE ANALYSIS]</scope>
</reference>
<reference key="13">
    <citation type="journal article" date="2011" name="J. Leukoc. Biol.">
        <title>SerpinB1 protects the mature neutrophil reserve in the bone marrow.</title>
        <authorList>
            <person name="Benarafa C."/>
            <person name="LeCuyer T.E."/>
            <person name="Baumann M."/>
            <person name="Stolley J.M."/>
            <person name="Cremona T.P."/>
            <person name="Remold-O'Donnell E."/>
        </authorList>
    </citation>
    <scope>TISSUE SPECIFICITY</scope>
</reference>
<reference key="14">
    <citation type="journal article" date="2011" name="BMC Syst. Biol.">
        <title>Initial characterization of the human central proteome.</title>
        <authorList>
            <person name="Burkard T.R."/>
            <person name="Planyavsky M."/>
            <person name="Kaupe I."/>
            <person name="Breitwieser F.P."/>
            <person name="Buerckstuemmer T."/>
            <person name="Bennett K.L."/>
            <person name="Superti-Furga G."/>
            <person name="Colinge J."/>
        </authorList>
    </citation>
    <scope>IDENTIFICATION BY MASS SPECTROMETRY [LARGE SCALE ANALYSIS]</scope>
</reference>
<reference key="15">
    <citation type="journal article" date="2012" name="Proc. Natl. Acad. Sci. U.S.A.">
        <title>N-terminal acetylome analyses and functional insights of the N-terminal acetyltransferase NatB.</title>
        <authorList>
            <person name="Van Damme P."/>
            <person name="Lasa M."/>
            <person name="Polevoda B."/>
            <person name="Gazquez C."/>
            <person name="Elosegui-Artola A."/>
            <person name="Kim D.S."/>
            <person name="De Juan-Pardo E."/>
            <person name="Demeyer K."/>
            <person name="Hole K."/>
            <person name="Larrea E."/>
            <person name="Timmerman E."/>
            <person name="Prieto J."/>
            <person name="Arnesen T."/>
            <person name="Sherman F."/>
            <person name="Gevaert K."/>
            <person name="Aldabe R."/>
        </authorList>
    </citation>
    <scope>ACETYLATION [LARGE SCALE ANALYSIS] AT MET-1</scope>
    <scope>IDENTIFICATION BY MASS SPECTROMETRY [LARGE SCALE ANALYSIS]</scope>
</reference>
<reference key="16">
    <citation type="journal article" date="2013" name="J. Proteome Res.">
        <title>Toward a comprehensive characterization of a human cancer cell phosphoproteome.</title>
        <authorList>
            <person name="Zhou H."/>
            <person name="Di Palma S."/>
            <person name="Preisinger C."/>
            <person name="Peng M."/>
            <person name="Polat A.N."/>
            <person name="Heck A.J."/>
            <person name="Mohammed S."/>
        </authorList>
    </citation>
    <scope>PHOSPHORYLATION [LARGE SCALE ANALYSIS] AT SER-300</scope>
    <scope>IDENTIFICATION BY MASS SPECTROMETRY [LARGE SCALE ANALYSIS]</scope>
    <source>
        <tissue>Erythroleukemia</tissue>
    </source>
</reference>
<reference key="17">
    <citation type="journal article" date="2016" name="Cell Metab.">
        <title>SerpinB1 Promotes Pancreatic beta Cell Proliferation.</title>
        <authorList>
            <person name="El Ouaamari A."/>
            <person name="Dirice E."/>
            <person name="Gedeon N."/>
            <person name="Hu J."/>
            <person name="Zhou J.Y."/>
            <person name="Shirakawa J."/>
            <person name="Hou L."/>
            <person name="Goodman J."/>
            <person name="Karampelias C."/>
            <person name="Qiang G."/>
            <person name="Boucher J."/>
            <person name="Martinez R."/>
            <person name="Gritsenko M.A."/>
            <person name="De Jesus D.F."/>
            <person name="Kahraman S."/>
            <person name="Bhatt S."/>
            <person name="Smith R.D."/>
            <person name="Beer H.D."/>
            <person name="Jungtrakoon P."/>
            <person name="Gong Y."/>
            <person name="Goldfine A.B."/>
            <person name="Liew C.W."/>
            <person name="Doria A."/>
            <person name="Andersson O."/>
            <person name="Qian W.J."/>
            <person name="Remold-O'Donnell E."/>
            <person name="Kulkarni R.N."/>
        </authorList>
    </citation>
    <scope>FUNCTION</scope>
    <scope>SUBCELLULAR LOCATION</scope>
</reference>
<reference key="18">
    <citation type="journal article" date="2019" name="Nat. Immunol.">
        <title>SERPINB1-mediated checkpoint of inflammatory caspase activation.</title>
        <authorList>
            <person name="Choi Y.J."/>
            <person name="Kim S."/>
            <person name="Choi Y."/>
            <person name="Nielsen T.B."/>
            <person name="Yan J."/>
            <person name="Lu A."/>
            <person name="Ruan J."/>
            <person name="Lee H.R."/>
            <person name="Wu H."/>
            <person name="Spellberg B."/>
            <person name="Jung J.U."/>
        </authorList>
    </citation>
    <scope>FUNCTION</scope>
    <scope>INTERACTION WITH CASP1; CASP4; CASP5 AND PRTN3</scope>
    <scope>MUTAGENESIS OF PHE-343 AND CYS-344</scope>
    <scope>DOMAIN</scope>
</reference>
<reference key="19">
    <citation type="journal article" date="2013" name="J. Immunol.">
        <title>Identification of SERPINB1 as a physiological inhibitor of human granzyme H.</title>
        <authorList>
            <person name="Wang L."/>
            <person name="Li Q."/>
            <person name="Wu L."/>
            <person name="Liu S."/>
            <person name="Zhang Y."/>
            <person name="Yang X."/>
            <person name="Zhu P."/>
            <person name="Zhang H."/>
            <person name="Zhang K."/>
            <person name="Lou J."/>
            <person name="Liu P."/>
            <person name="Tong L."/>
            <person name="Sun F."/>
            <person name="Fan Z."/>
        </authorList>
    </citation>
    <scope>X-RAY CRYSTALLOGRAPHY (2.9 ANGSTROMS) IN COMPLEX WITH GZMH</scope>
    <scope>SUBCELLULAR LOCATION</scope>
    <scope>SUBUNIT</scope>
    <scope>FUNCTION</scope>
</reference>
<sequence length="379" mass="42742">MEQLSSANTRFALDLFLALSENNPAGNIFISPFSISSAMAMVFLGTRGNTAAQLSKTFHFNTVEEVHSRFQSLNADINKRGASYILKLANRLYGEKTYNFLPEFLVSTQKTYGADLASVDFQHASEDARKTINQWVKGQTEGKIPELLASGMVDNMTKLVLVNAIYFKGNWKDKFMKEATTNAPFRLNKKDRKTVKMMYQKKKFAYGYIEDLKCRVLELPYQGEELSMVILLPDDIEDESTGLKKIEEQLTLEKLHEWTKPENLDFIEVNVSLPRFKLEESYTLNSDLARLGVQDLFNSSKADLSGMSGARDIFISKIVHKSFVEVNEEGTEAAAATAGIATFCMLMPEENFTADHPFLFFIRHNSSGSILFLGRFSSP</sequence>
<protein>
    <recommendedName>
        <fullName>Leukocyte elastase inhibitor</fullName>
        <shortName>LEI</shortName>
    </recommendedName>
    <alternativeName>
        <fullName>Monocyte/neutrophil elastase inhibitor</fullName>
        <shortName>EI</shortName>
        <shortName>M/NEI</shortName>
    </alternativeName>
    <alternativeName>
        <fullName>Peptidase inhibitor 2</fullName>
        <shortName>PI-2</shortName>
    </alternativeName>
    <alternativeName>
        <fullName>Serpin B1</fullName>
    </alternativeName>
</protein>
<evidence type="ECO:0000269" key="1">
    <source>
    </source>
</evidence>
<evidence type="ECO:0000269" key="2">
    <source>
    </source>
</evidence>
<evidence type="ECO:0000269" key="3">
    <source>
    </source>
</evidence>
<evidence type="ECO:0000269" key="4">
    <source>
    </source>
</evidence>
<evidence type="ECO:0000269" key="5">
    <source>
    </source>
</evidence>
<evidence type="ECO:0000269" key="6">
    <source>
    </source>
</evidence>
<evidence type="ECO:0000303" key="7">
    <source>
    </source>
</evidence>
<evidence type="ECO:0000305" key="8"/>
<evidence type="ECO:0007744" key="9">
    <source>
    </source>
</evidence>
<evidence type="ECO:0007744" key="10">
    <source>
    </source>
</evidence>
<evidence type="ECO:0007744" key="11">
    <source>
    </source>
</evidence>
<evidence type="ECO:0007829" key="12">
    <source>
        <dbReference type="PDB" id="4GA7"/>
    </source>
</evidence>